<proteinExistence type="inferred from homology"/>
<organism>
    <name type="scientific">Helicobacter pylori (strain HPAG1)</name>
    <dbReference type="NCBI Taxonomy" id="357544"/>
    <lineage>
        <taxon>Bacteria</taxon>
        <taxon>Pseudomonadati</taxon>
        <taxon>Campylobacterota</taxon>
        <taxon>Epsilonproteobacteria</taxon>
        <taxon>Campylobacterales</taxon>
        <taxon>Helicobacteraceae</taxon>
        <taxon>Helicobacter</taxon>
    </lineage>
</organism>
<protein>
    <recommendedName>
        <fullName evidence="1">Alanine racemase</fullName>
        <ecNumber evidence="1">5.1.1.1</ecNumber>
    </recommendedName>
</protein>
<name>ALR_HELPH</name>
<feature type="chain" id="PRO_1000065993" description="Alanine racemase">
    <location>
        <begin position="1"/>
        <end position="377"/>
    </location>
</feature>
<feature type="active site" description="Proton acceptor; specific for D-alanine" evidence="1">
    <location>
        <position position="37"/>
    </location>
</feature>
<feature type="active site" description="Proton acceptor; specific for L-alanine" evidence="1">
    <location>
        <position position="271"/>
    </location>
</feature>
<feature type="binding site" evidence="1">
    <location>
        <position position="135"/>
    </location>
    <ligand>
        <name>substrate</name>
    </ligand>
</feature>
<feature type="binding site" evidence="1">
    <location>
        <position position="319"/>
    </location>
    <ligand>
        <name>substrate</name>
    </ligand>
</feature>
<feature type="modified residue" description="N6-(pyridoxal phosphate)lysine" evidence="1">
    <location>
        <position position="37"/>
    </location>
</feature>
<accession>Q1CST1</accession>
<gene>
    <name type="primary">alr</name>
    <name type="ordered locus">HPAG1_0924</name>
</gene>
<reference key="1">
    <citation type="journal article" date="2006" name="Proc. Natl. Acad. Sci. U.S.A.">
        <title>The complete genome sequence of a chronic atrophic gastritis Helicobacter pylori strain: evolution during disease progression.</title>
        <authorList>
            <person name="Oh J.D."/>
            <person name="Kling-Baeckhed H."/>
            <person name="Giannakis M."/>
            <person name="Xu J."/>
            <person name="Fulton R.S."/>
            <person name="Fulton L.A."/>
            <person name="Cordum H.S."/>
            <person name="Wang C."/>
            <person name="Elliott G."/>
            <person name="Edwards J."/>
            <person name="Mardis E.R."/>
            <person name="Engstrand L.G."/>
            <person name="Gordon J.I."/>
        </authorList>
    </citation>
    <scope>NUCLEOTIDE SEQUENCE [LARGE SCALE GENOMIC DNA]</scope>
    <source>
        <strain>HPAG1</strain>
    </source>
</reference>
<evidence type="ECO:0000255" key="1">
    <source>
        <dbReference type="HAMAP-Rule" id="MF_01201"/>
    </source>
</evidence>
<sequence length="377" mass="41730">MLKRASFVEVNSASLRHNFSAVKSIVPKDAHIMAVVKANAYGAGAIKASEIFLQEGANYLGVAALDEALELRSHFPKTPILILGYSPNANASMLIDNDLSAMVFSLEQAEVFSQMALKSQKRLKVHLKIDTGMHRLGLEPNFKSIETIKKIRALKGLEIEGIFTHLSNADAKIKTHAKNQMKAFNAFLEQLLDQKIEFQYRHAYNSAGILSLCNGNENRLLNLYRPGIMLYGFYPSNGMKESCPTILKNVISLKAQIVQIRSVKKGEFIGYGEHFYTNEETLVGVLALGYADGLMRALGNRIQVAINNQLAPLIGKVCMDQCFVKLNDIQAKEGDEVILFGDKSARANDASEIAALLNTIAYETISTLSKRLERVYI</sequence>
<keyword id="KW-0413">Isomerase</keyword>
<keyword id="KW-0663">Pyridoxal phosphate</keyword>
<comment type="function">
    <text evidence="1">Catalyzes the interconversion of L-alanine and D-alanine. May also act on other amino acids.</text>
</comment>
<comment type="catalytic activity">
    <reaction evidence="1">
        <text>L-alanine = D-alanine</text>
        <dbReference type="Rhea" id="RHEA:20249"/>
        <dbReference type="ChEBI" id="CHEBI:57416"/>
        <dbReference type="ChEBI" id="CHEBI:57972"/>
        <dbReference type="EC" id="5.1.1.1"/>
    </reaction>
</comment>
<comment type="cofactor">
    <cofactor evidence="1">
        <name>pyridoxal 5'-phosphate</name>
        <dbReference type="ChEBI" id="CHEBI:597326"/>
    </cofactor>
</comment>
<comment type="pathway">
    <text evidence="1">Amino-acid biosynthesis; D-alanine biosynthesis; D-alanine from L-alanine: step 1/1.</text>
</comment>
<comment type="similarity">
    <text evidence="1">Belongs to the alanine racemase family.</text>
</comment>
<dbReference type="EC" id="5.1.1.1" evidence="1"/>
<dbReference type="EMBL" id="CP000241">
    <property type="protein sequence ID" value="ABF84991.1"/>
    <property type="molecule type" value="Genomic_DNA"/>
</dbReference>
<dbReference type="RefSeq" id="WP_000917930.1">
    <property type="nucleotide sequence ID" value="NC_008086.1"/>
</dbReference>
<dbReference type="SMR" id="Q1CST1"/>
<dbReference type="KEGG" id="hpa:HPAG1_0924"/>
<dbReference type="HOGENOM" id="CLU_028393_2_2_7"/>
<dbReference type="UniPathway" id="UPA00042">
    <property type="reaction ID" value="UER00497"/>
</dbReference>
<dbReference type="GO" id="GO:0005829">
    <property type="term" value="C:cytosol"/>
    <property type="evidence" value="ECO:0007669"/>
    <property type="project" value="TreeGrafter"/>
</dbReference>
<dbReference type="GO" id="GO:0008784">
    <property type="term" value="F:alanine racemase activity"/>
    <property type="evidence" value="ECO:0007669"/>
    <property type="project" value="UniProtKB-UniRule"/>
</dbReference>
<dbReference type="GO" id="GO:0030170">
    <property type="term" value="F:pyridoxal phosphate binding"/>
    <property type="evidence" value="ECO:0007669"/>
    <property type="project" value="UniProtKB-UniRule"/>
</dbReference>
<dbReference type="GO" id="GO:0030632">
    <property type="term" value="P:D-alanine biosynthetic process"/>
    <property type="evidence" value="ECO:0007669"/>
    <property type="project" value="UniProtKB-UniRule"/>
</dbReference>
<dbReference type="CDD" id="cd00430">
    <property type="entry name" value="PLPDE_III_AR"/>
    <property type="match status" value="1"/>
</dbReference>
<dbReference type="FunFam" id="3.20.20.10:FF:000002">
    <property type="entry name" value="Alanine racemase"/>
    <property type="match status" value="1"/>
</dbReference>
<dbReference type="Gene3D" id="3.20.20.10">
    <property type="entry name" value="Alanine racemase"/>
    <property type="match status" value="1"/>
</dbReference>
<dbReference type="Gene3D" id="2.40.37.10">
    <property type="entry name" value="Lyase, Ornithine Decarboxylase, Chain A, domain 1"/>
    <property type="match status" value="1"/>
</dbReference>
<dbReference type="HAMAP" id="MF_01201">
    <property type="entry name" value="Ala_racemase"/>
    <property type="match status" value="1"/>
</dbReference>
<dbReference type="InterPro" id="IPR000821">
    <property type="entry name" value="Ala_racemase"/>
</dbReference>
<dbReference type="InterPro" id="IPR009006">
    <property type="entry name" value="Ala_racemase/Decarboxylase_C"/>
</dbReference>
<dbReference type="InterPro" id="IPR011079">
    <property type="entry name" value="Ala_racemase_C"/>
</dbReference>
<dbReference type="InterPro" id="IPR001608">
    <property type="entry name" value="Ala_racemase_N"/>
</dbReference>
<dbReference type="InterPro" id="IPR020622">
    <property type="entry name" value="Ala_racemase_pyridoxalP-BS"/>
</dbReference>
<dbReference type="InterPro" id="IPR029066">
    <property type="entry name" value="PLP-binding_barrel"/>
</dbReference>
<dbReference type="NCBIfam" id="TIGR00492">
    <property type="entry name" value="alr"/>
    <property type="match status" value="1"/>
</dbReference>
<dbReference type="PANTHER" id="PTHR30511">
    <property type="entry name" value="ALANINE RACEMASE"/>
    <property type="match status" value="1"/>
</dbReference>
<dbReference type="PANTHER" id="PTHR30511:SF0">
    <property type="entry name" value="ALANINE RACEMASE, CATABOLIC-RELATED"/>
    <property type="match status" value="1"/>
</dbReference>
<dbReference type="Pfam" id="PF00842">
    <property type="entry name" value="Ala_racemase_C"/>
    <property type="match status" value="1"/>
</dbReference>
<dbReference type="Pfam" id="PF01168">
    <property type="entry name" value="Ala_racemase_N"/>
    <property type="match status" value="1"/>
</dbReference>
<dbReference type="PRINTS" id="PR00992">
    <property type="entry name" value="ALARACEMASE"/>
</dbReference>
<dbReference type="SMART" id="SM01005">
    <property type="entry name" value="Ala_racemase_C"/>
    <property type="match status" value="1"/>
</dbReference>
<dbReference type="SUPFAM" id="SSF50621">
    <property type="entry name" value="Alanine racemase C-terminal domain-like"/>
    <property type="match status" value="1"/>
</dbReference>
<dbReference type="SUPFAM" id="SSF51419">
    <property type="entry name" value="PLP-binding barrel"/>
    <property type="match status" value="1"/>
</dbReference>
<dbReference type="PROSITE" id="PS00395">
    <property type="entry name" value="ALANINE_RACEMASE"/>
    <property type="match status" value="1"/>
</dbReference>